<comment type="function">
    <text evidence="1">Fluoride-specific ion channel. Important for reducing fluoride concentration in the cell, thus reducing its toxicity.</text>
</comment>
<comment type="catalytic activity">
    <reaction evidence="1">
        <text>fluoride(in) = fluoride(out)</text>
        <dbReference type="Rhea" id="RHEA:76159"/>
        <dbReference type="ChEBI" id="CHEBI:17051"/>
    </reaction>
    <physiologicalReaction direction="left-to-right" evidence="1">
        <dbReference type="Rhea" id="RHEA:76160"/>
    </physiologicalReaction>
</comment>
<comment type="activity regulation">
    <text evidence="1">Na(+) is not transported, but it plays an essential structural role and its presence is essential for fluoride channel function.</text>
</comment>
<comment type="subcellular location">
    <subcellularLocation>
        <location evidence="1">Cell inner membrane</location>
        <topology evidence="1">Multi-pass membrane protein</topology>
    </subcellularLocation>
</comment>
<comment type="similarity">
    <text evidence="1">Belongs to the fluoride channel Fluc/FEX (TC 1.A.43) family.</text>
</comment>
<accession>Q4K9V6</accession>
<feature type="chain" id="PRO_0000252914" description="Fluoride-specific ion channel FluC">
    <location>
        <begin position="1"/>
        <end position="124"/>
    </location>
</feature>
<feature type="transmembrane region" description="Helical" evidence="1">
    <location>
        <begin position="1"/>
        <end position="21"/>
    </location>
</feature>
<feature type="transmembrane region" description="Helical" evidence="1">
    <location>
        <begin position="38"/>
        <end position="58"/>
    </location>
</feature>
<feature type="transmembrane region" description="Helical" evidence="1">
    <location>
        <begin position="69"/>
        <end position="89"/>
    </location>
</feature>
<feature type="transmembrane region" description="Helical" evidence="1">
    <location>
        <begin position="97"/>
        <end position="117"/>
    </location>
</feature>
<feature type="binding site" evidence="1">
    <location>
        <position position="76"/>
    </location>
    <ligand>
        <name>Na(+)</name>
        <dbReference type="ChEBI" id="CHEBI:29101"/>
        <note>structural</note>
    </ligand>
</feature>
<feature type="binding site" evidence="1">
    <location>
        <position position="79"/>
    </location>
    <ligand>
        <name>Na(+)</name>
        <dbReference type="ChEBI" id="CHEBI:29101"/>
        <note>structural</note>
    </ligand>
</feature>
<evidence type="ECO:0000255" key="1">
    <source>
        <dbReference type="HAMAP-Rule" id="MF_00454"/>
    </source>
</evidence>
<protein>
    <recommendedName>
        <fullName evidence="1">Fluoride-specific ion channel FluC</fullName>
    </recommendedName>
</protein>
<gene>
    <name evidence="1" type="primary">fluC</name>
    <name evidence="1" type="synonym">crcB</name>
    <name type="ordered locus">PFL_3877</name>
</gene>
<name>FLUC_PSEF5</name>
<dbReference type="EMBL" id="CP000076">
    <property type="protein sequence ID" value="AAY93141.1"/>
    <property type="molecule type" value="Genomic_DNA"/>
</dbReference>
<dbReference type="RefSeq" id="WP_011062165.1">
    <property type="nucleotide sequence ID" value="NC_004129.6"/>
</dbReference>
<dbReference type="SMR" id="Q4K9V6"/>
<dbReference type="STRING" id="220664.PFL_3877"/>
<dbReference type="GeneID" id="57476944"/>
<dbReference type="KEGG" id="pfl:PFL_3877"/>
<dbReference type="PATRIC" id="fig|220664.5.peg.3972"/>
<dbReference type="eggNOG" id="COG0239">
    <property type="taxonomic scope" value="Bacteria"/>
</dbReference>
<dbReference type="HOGENOM" id="CLU_114342_1_2_6"/>
<dbReference type="Proteomes" id="UP000008540">
    <property type="component" value="Chromosome"/>
</dbReference>
<dbReference type="GO" id="GO:0005886">
    <property type="term" value="C:plasma membrane"/>
    <property type="evidence" value="ECO:0007669"/>
    <property type="project" value="UniProtKB-SubCell"/>
</dbReference>
<dbReference type="GO" id="GO:0062054">
    <property type="term" value="F:fluoride channel activity"/>
    <property type="evidence" value="ECO:0007669"/>
    <property type="project" value="UniProtKB-UniRule"/>
</dbReference>
<dbReference type="GO" id="GO:0046872">
    <property type="term" value="F:metal ion binding"/>
    <property type="evidence" value="ECO:0007669"/>
    <property type="project" value="UniProtKB-KW"/>
</dbReference>
<dbReference type="GO" id="GO:0140114">
    <property type="term" value="P:cellular detoxification of fluoride"/>
    <property type="evidence" value="ECO:0007669"/>
    <property type="project" value="UniProtKB-UniRule"/>
</dbReference>
<dbReference type="HAMAP" id="MF_00454">
    <property type="entry name" value="FluC"/>
    <property type="match status" value="1"/>
</dbReference>
<dbReference type="InterPro" id="IPR003691">
    <property type="entry name" value="FluC"/>
</dbReference>
<dbReference type="NCBIfam" id="TIGR00494">
    <property type="entry name" value="crcB"/>
    <property type="match status" value="1"/>
</dbReference>
<dbReference type="NCBIfam" id="NF010830">
    <property type="entry name" value="PRK14234.1"/>
    <property type="match status" value="1"/>
</dbReference>
<dbReference type="PANTHER" id="PTHR28259">
    <property type="entry name" value="FLUORIDE EXPORT PROTEIN 1-RELATED"/>
    <property type="match status" value="1"/>
</dbReference>
<dbReference type="PANTHER" id="PTHR28259:SF1">
    <property type="entry name" value="FLUORIDE EXPORT PROTEIN 1-RELATED"/>
    <property type="match status" value="1"/>
</dbReference>
<dbReference type="Pfam" id="PF02537">
    <property type="entry name" value="CRCB"/>
    <property type="match status" value="1"/>
</dbReference>
<sequence length="124" mass="12977">MIPLILAVSAGGVAGTLLRFATGNWINANWPRHFYTATLAVNIVGCLLIGVLYGLFLVRPEVPIEVRAGLIVGFLGGLTTFSSFSLDTVRLLESGQVALALGYAALSVFGGLLATWAGLSLTKL</sequence>
<reference key="1">
    <citation type="journal article" date="2005" name="Nat. Biotechnol.">
        <title>Complete genome sequence of the plant commensal Pseudomonas fluorescens Pf-5.</title>
        <authorList>
            <person name="Paulsen I.T."/>
            <person name="Press C.M."/>
            <person name="Ravel J."/>
            <person name="Kobayashi D.Y."/>
            <person name="Myers G.S.A."/>
            <person name="Mavrodi D.V."/>
            <person name="DeBoy R.T."/>
            <person name="Seshadri R."/>
            <person name="Ren Q."/>
            <person name="Madupu R."/>
            <person name="Dodson R.J."/>
            <person name="Durkin A.S."/>
            <person name="Brinkac L.M."/>
            <person name="Daugherty S.C."/>
            <person name="Sullivan S.A."/>
            <person name="Rosovitz M.J."/>
            <person name="Gwinn M.L."/>
            <person name="Zhou L."/>
            <person name="Schneider D.J."/>
            <person name="Cartinhour S.W."/>
            <person name="Nelson W.C."/>
            <person name="Weidman J."/>
            <person name="Watkins K."/>
            <person name="Tran K."/>
            <person name="Khouri H."/>
            <person name="Pierson E.A."/>
            <person name="Pierson L.S. III"/>
            <person name="Thomashow L.S."/>
            <person name="Loper J.E."/>
        </authorList>
    </citation>
    <scope>NUCLEOTIDE SEQUENCE [LARGE SCALE GENOMIC DNA]</scope>
    <source>
        <strain>ATCC BAA-477 / NRRL B-23932 / Pf-5</strain>
    </source>
</reference>
<keyword id="KW-0997">Cell inner membrane</keyword>
<keyword id="KW-1003">Cell membrane</keyword>
<keyword id="KW-0407">Ion channel</keyword>
<keyword id="KW-0406">Ion transport</keyword>
<keyword id="KW-0472">Membrane</keyword>
<keyword id="KW-0479">Metal-binding</keyword>
<keyword id="KW-0915">Sodium</keyword>
<keyword id="KW-0812">Transmembrane</keyword>
<keyword id="KW-1133">Transmembrane helix</keyword>
<keyword id="KW-0813">Transport</keyword>
<organism>
    <name type="scientific">Pseudomonas fluorescens (strain ATCC BAA-477 / NRRL B-23932 / Pf-5)</name>
    <dbReference type="NCBI Taxonomy" id="220664"/>
    <lineage>
        <taxon>Bacteria</taxon>
        <taxon>Pseudomonadati</taxon>
        <taxon>Pseudomonadota</taxon>
        <taxon>Gammaproteobacteria</taxon>
        <taxon>Pseudomonadales</taxon>
        <taxon>Pseudomonadaceae</taxon>
        <taxon>Pseudomonas</taxon>
    </lineage>
</organism>
<proteinExistence type="inferred from homology"/>